<reference key="1">
    <citation type="submission" date="2009-05" db="EMBL/GenBank/DDBJ databases">
        <title>Complete sequence of Tolumonas auensis DSM 9187.</title>
        <authorList>
            <consortium name="US DOE Joint Genome Institute"/>
            <person name="Lucas S."/>
            <person name="Copeland A."/>
            <person name="Lapidus A."/>
            <person name="Glavina del Rio T."/>
            <person name="Tice H."/>
            <person name="Bruce D."/>
            <person name="Goodwin L."/>
            <person name="Pitluck S."/>
            <person name="Chertkov O."/>
            <person name="Brettin T."/>
            <person name="Detter J.C."/>
            <person name="Han C."/>
            <person name="Larimer F."/>
            <person name="Land M."/>
            <person name="Hauser L."/>
            <person name="Kyrpides N."/>
            <person name="Mikhailova N."/>
            <person name="Spring S."/>
            <person name="Beller H."/>
        </authorList>
    </citation>
    <scope>NUCLEOTIDE SEQUENCE [LARGE SCALE GENOMIC DNA]</scope>
    <source>
        <strain>DSM 9187 / NBRC 110442 / TA 4</strain>
    </source>
</reference>
<gene>
    <name evidence="1" type="primary">fluC</name>
    <name evidence="1" type="synonym">crcB</name>
    <name type="ordered locus">Tola_2564</name>
</gene>
<organism>
    <name type="scientific">Tolumonas auensis (strain DSM 9187 / NBRC 110442 / TA 4)</name>
    <dbReference type="NCBI Taxonomy" id="595494"/>
    <lineage>
        <taxon>Bacteria</taxon>
        <taxon>Pseudomonadati</taxon>
        <taxon>Pseudomonadota</taxon>
        <taxon>Gammaproteobacteria</taxon>
        <taxon>Aeromonadales</taxon>
        <taxon>Aeromonadaceae</taxon>
        <taxon>Tolumonas</taxon>
    </lineage>
</organism>
<comment type="function">
    <text evidence="1">Fluoride-specific ion channel. Important for reducing fluoride concentration in the cell, thus reducing its toxicity.</text>
</comment>
<comment type="catalytic activity">
    <reaction evidence="1">
        <text>fluoride(in) = fluoride(out)</text>
        <dbReference type="Rhea" id="RHEA:76159"/>
        <dbReference type="ChEBI" id="CHEBI:17051"/>
    </reaction>
    <physiologicalReaction direction="left-to-right" evidence="1">
        <dbReference type="Rhea" id="RHEA:76160"/>
    </physiologicalReaction>
</comment>
<comment type="activity regulation">
    <text evidence="1">Na(+) is not transported, but it plays an essential structural role and its presence is essential for fluoride channel function.</text>
</comment>
<comment type="subcellular location">
    <subcellularLocation>
        <location evidence="1">Cell inner membrane</location>
        <topology evidence="1">Multi-pass membrane protein</topology>
    </subcellularLocation>
</comment>
<comment type="similarity">
    <text evidence="1">Belongs to the fluoride channel Fluc/FEX (TC 1.A.43) family.</text>
</comment>
<name>FLUC_TOLAT</name>
<protein>
    <recommendedName>
        <fullName evidence="1">Fluoride-specific ion channel FluC</fullName>
    </recommendedName>
</protein>
<keyword id="KW-0997">Cell inner membrane</keyword>
<keyword id="KW-1003">Cell membrane</keyword>
<keyword id="KW-0407">Ion channel</keyword>
<keyword id="KW-0406">Ion transport</keyword>
<keyword id="KW-0472">Membrane</keyword>
<keyword id="KW-0479">Metal-binding</keyword>
<keyword id="KW-1185">Reference proteome</keyword>
<keyword id="KW-0915">Sodium</keyword>
<keyword id="KW-0812">Transmembrane</keyword>
<keyword id="KW-1133">Transmembrane helix</keyword>
<keyword id="KW-0813">Transport</keyword>
<sequence>MLYSVLAISLGASAGAVSRWLLGLGFNTLFPTIPPGTLLANLLGGYLIGIAVTFFAANPNLPPEWRLLVITGFLGGLTTFSTFSAEVTTLLQQGRLLWAGGAIAVHVIGSLVMTLLGMATMSLLQRS</sequence>
<accession>C4LAI3</accession>
<feature type="chain" id="PRO_1000206263" description="Fluoride-specific ion channel FluC">
    <location>
        <begin position="1"/>
        <end position="127"/>
    </location>
</feature>
<feature type="transmembrane region" description="Helical" evidence="1">
    <location>
        <begin position="6"/>
        <end position="26"/>
    </location>
</feature>
<feature type="transmembrane region" description="Helical" evidence="1">
    <location>
        <begin position="37"/>
        <end position="57"/>
    </location>
</feature>
<feature type="transmembrane region" description="Helical" evidence="1">
    <location>
        <begin position="67"/>
        <end position="87"/>
    </location>
</feature>
<feature type="transmembrane region" description="Helical" evidence="1">
    <location>
        <begin position="96"/>
        <end position="116"/>
    </location>
</feature>
<feature type="binding site" evidence="1">
    <location>
        <position position="75"/>
    </location>
    <ligand>
        <name>Na(+)</name>
        <dbReference type="ChEBI" id="CHEBI:29101"/>
        <note>structural</note>
    </ligand>
</feature>
<feature type="binding site" evidence="1">
    <location>
        <position position="78"/>
    </location>
    <ligand>
        <name>Na(+)</name>
        <dbReference type="ChEBI" id="CHEBI:29101"/>
        <note>structural</note>
    </ligand>
</feature>
<dbReference type="EMBL" id="CP001616">
    <property type="protein sequence ID" value="ACQ94158.1"/>
    <property type="molecule type" value="Genomic_DNA"/>
</dbReference>
<dbReference type="RefSeq" id="WP_015879607.1">
    <property type="nucleotide sequence ID" value="NC_012691.1"/>
</dbReference>
<dbReference type="SMR" id="C4LAI3"/>
<dbReference type="STRING" id="595494.Tola_2564"/>
<dbReference type="KEGG" id="tau:Tola_2564"/>
<dbReference type="eggNOG" id="COG0239">
    <property type="taxonomic scope" value="Bacteria"/>
</dbReference>
<dbReference type="HOGENOM" id="CLU_114342_3_3_6"/>
<dbReference type="OrthoDB" id="9806299at2"/>
<dbReference type="Proteomes" id="UP000009073">
    <property type="component" value="Chromosome"/>
</dbReference>
<dbReference type="GO" id="GO:0005886">
    <property type="term" value="C:plasma membrane"/>
    <property type="evidence" value="ECO:0007669"/>
    <property type="project" value="UniProtKB-SubCell"/>
</dbReference>
<dbReference type="GO" id="GO:0062054">
    <property type="term" value="F:fluoride channel activity"/>
    <property type="evidence" value="ECO:0007669"/>
    <property type="project" value="UniProtKB-UniRule"/>
</dbReference>
<dbReference type="GO" id="GO:0046872">
    <property type="term" value="F:metal ion binding"/>
    <property type="evidence" value="ECO:0007669"/>
    <property type="project" value="UniProtKB-KW"/>
</dbReference>
<dbReference type="GO" id="GO:0140114">
    <property type="term" value="P:cellular detoxification of fluoride"/>
    <property type="evidence" value="ECO:0007669"/>
    <property type="project" value="UniProtKB-UniRule"/>
</dbReference>
<dbReference type="HAMAP" id="MF_00454">
    <property type="entry name" value="FluC"/>
    <property type="match status" value="1"/>
</dbReference>
<dbReference type="InterPro" id="IPR003691">
    <property type="entry name" value="FluC"/>
</dbReference>
<dbReference type="NCBIfam" id="TIGR00494">
    <property type="entry name" value="crcB"/>
    <property type="match status" value="1"/>
</dbReference>
<dbReference type="NCBIfam" id="NF010792">
    <property type="entry name" value="PRK14196.1"/>
    <property type="match status" value="1"/>
</dbReference>
<dbReference type="PANTHER" id="PTHR28259">
    <property type="entry name" value="FLUORIDE EXPORT PROTEIN 1-RELATED"/>
    <property type="match status" value="1"/>
</dbReference>
<dbReference type="PANTHER" id="PTHR28259:SF1">
    <property type="entry name" value="FLUORIDE EXPORT PROTEIN 1-RELATED"/>
    <property type="match status" value="1"/>
</dbReference>
<dbReference type="Pfam" id="PF02537">
    <property type="entry name" value="CRCB"/>
    <property type="match status" value="1"/>
</dbReference>
<evidence type="ECO:0000255" key="1">
    <source>
        <dbReference type="HAMAP-Rule" id="MF_00454"/>
    </source>
</evidence>
<proteinExistence type="inferred from homology"/>